<reference key="1">
    <citation type="journal article" date="2003" name="DNA Res.">
        <title>Complete genome structure of Gloeobacter violaceus PCC 7421, a cyanobacterium that lacks thylakoids.</title>
        <authorList>
            <person name="Nakamura Y."/>
            <person name="Kaneko T."/>
            <person name="Sato S."/>
            <person name="Mimuro M."/>
            <person name="Miyashita H."/>
            <person name="Tsuchiya T."/>
            <person name="Sasamoto S."/>
            <person name="Watanabe A."/>
            <person name="Kawashima K."/>
            <person name="Kishida Y."/>
            <person name="Kiyokawa C."/>
            <person name="Kohara M."/>
            <person name="Matsumoto M."/>
            <person name="Matsuno A."/>
            <person name="Nakazaki N."/>
            <person name="Shimpo S."/>
            <person name="Takeuchi C."/>
            <person name="Yamada M."/>
            <person name="Tabata S."/>
        </authorList>
    </citation>
    <scope>NUCLEOTIDE SEQUENCE [LARGE SCALE GENOMIC DNA]</scope>
    <source>
        <strain>ATCC 29082 / PCC 7421</strain>
    </source>
</reference>
<accession>Q7NJA4</accession>
<sequence>MRSDYCGTLRSEHIGKTVSLYGWIDGWRDHGGVIFLDLRDYTGIVQIVADPQRTPESYHLASSLRNEYVVRVEGRVSARPEHSLNPRLSTGTVEVYADTLAVLNRAETPPFAISKDEEVDEKLRLKFRYLDLRRGRMQKLLRLRHRVMQIMRRHLDERGFTEIETPVLVKSTPEGARDYLVPSRVNPGDWFALPQSPQLFKQLLMVAGFDRYYQIARCFRDEDLRADRQPEFTQLDMEMSFLSMEEIIALNEGLVAAILQETMGLELSLPLPRLTYAEAMVRYGSDKPDTRFGLELVEVSEVFRESSFQVLSGAVAAGGKVVCLPVPGAEGITNTRVKPGGDLFEFVTQFGARGLLFARVREGGQVDTIGAFSKSLTPEIAAGMIEKTGAQPGHLLLFGAGDRTAVPTVLDYMGRLRLKMGEELGLIDPNRHNLLWVTDFPMFEWNAEEKRLEALHHPFTAPRPEDEHDLKTARALAYDIIWNGVEVGGGSLRIYRRALQERVFETIGLTEEEARAKFGFLLDAFEYGTPPHGGIAYGFDRFVMLIAGEQSIREVIAFPKTQRAQDLMLGAPSAVAERQLKELNVRSTLPPKTQG</sequence>
<name>SYDND_GLOVI</name>
<proteinExistence type="inferred from homology"/>
<keyword id="KW-0030">Aminoacyl-tRNA synthetase</keyword>
<keyword id="KW-0067">ATP-binding</keyword>
<keyword id="KW-0963">Cytoplasm</keyword>
<keyword id="KW-0436">Ligase</keyword>
<keyword id="KW-0547">Nucleotide-binding</keyword>
<keyword id="KW-0648">Protein biosynthesis</keyword>
<keyword id="KW-1185">Reference proteome</keyword>
<organism>
    <name type="scientific">Gloeobacter violaceus (strain ATCC 29082 / PCC 7421)</name>
    <dbReference type="NCBI Taxonomy" id="251221"/>
    <lineage>
        <taxon>Bacteria</taxon>
        <taxon>Bacillati</taxon>
        <taxon>Cyanobacteriota</taxon>
        <taxon>Cyanophyceae</taxon>
        <taxon>Gloeobacterales</taxon>
        <taxon>Gloeobacteraceae</taxon>
        <taxon>Gloeobacter</taxon>
    </lineage>
</organism>
<feature type="chain" id="PRO_0000110877" description="Aspartate--tRNA(Asp/Asn) ligase">
    <location>
        <begin position="1"/>
        <end position="595"/>
    </location>
</feature>
<feature type="region of interest" description="Aspartate" evidence="1">
    <location>
        <begin position="198"/>
        <end position="201"/>
    </location>
</feature>
<feature type="binding site" evidence="1">
    <location>
        <position position="174"/>
    </location>
    <ligand>
        <name>L-aspartate</name>
        <dbReference type="ChEBI" id="CHEBI:29991"/>
    </ligand>
</feature>
<feature type="binding site" evidence="1">
    <location>
        <begin position="220"/>
        <end position="222"/>
    </location>
    <ligand>
        <name>ATP</name>
        <dbReference type="ChEBI" id="CHEBI:30616"/>
    </ligand>
</feature>
<feature type="binding site" evidence="1">
    <location>
        <position position="220"/>
    </location>
    <ligand>
        <name>L-aspartate</name>
        <dbReference type="ChEBI" id="CHEBI:29991"/>
    </ligand>
</feature>
<feature type="binding site" evidence="1">
    <location>
        <position position="229"/>
    </location>
    <ligand>
        <name>ATP</name>
        <dbReference type="ChEBI" id="CHEBI:30616"/>
    </ligand>
</feature>
<feature type="binding site" evidence="1">
    <location>
        <position position="456"/>
    </location>
    <ligand>
        <name>L-aspartate</name>
        <dbReference type="ChEBI" id="CHEBI:29991"/>
    </ligand>
</feature>
<feature type="binding site" evidence="1">
    <location>
        <position position="486"/>
    </location>
    <ligand>
        <name>ATP</name>
        <dbReference type="ChEBI" id="CHEBI:30616"/>
    </ligand>
</feature>
<feature type="binding site" evidence="1">
    <location>
        <position position="493"/>
    </location>
    <ligand>
        <name>L-aspartate</name>
        <dbReference type="ChEBI" id="CHEBI:29991"/>
    </ligand>
</feature>
<feature type="binding site" evidence="1">
    <location>
        <begin position="538"/>
        <end position="541"/>
    </location>
    <ligand>
        <name>ATP</name>
        <dbReference type="ChEBI" id="CHEBI:30616"/>
    </ligand>
</feature>
<feature type="site" description="Important for tRNA non-discrimination" evidence="1">
    <location>
        <position position="30"/>
    </location>
</feature>
<dbReference type="EC" id="6.1.1.23" evidence="1"/>
<dbReference type="EMBL" id="BA000045">
    <property type="protein sequence ID" value="BAC89869.1"/>
    <property type="molecule type" value="Genomic_DNA"/>
</dbReference>
<dbReference type="RefSeq" id="NP_924874.1">
    <property type="nucleotide sequence ID" value="NC_005125.1"/>
</dbReference>
<dbReference type="RefSeq" id="WP_011141926.1">
    <property type="nucleotide sequence ID" value="NC_005125.1"/>
</dbReference>
<dbReference type="SMR" id="Q7NJA4"/>
<dbReference type="FunCoup" id="Q7NJA4">
    <property type="interactions" value="377"/>
</dbReference>
<dbReference type="STRING" id="251221.gene:10759420"/>
<dbReference type="EnsemblBacteria" id="BAC89869">
    <property type="protein sequence ID" value="BAC89869"/>
    <property type="gene ID" value="BAC89869"/>
</dbReference>
<dbReference type="KEGG" id="gvi:gll1928"/>
<dbReference type="PATRIC" id="fig|251221.4.peg.1962"/>
<dbReference type="eggNOG" id="COG0173">
    <property type="taxonomic scope" value="Bacteria"/>
</dbReference>
<dbReference type="HOGENOM" id="CLU_014330_3_2_3"/>
<dbReference type="InParanoid" id="Q7NJA4"/>
<dbReference type="OrthoDB" id="9802326at2"/>
<dbReference type="PhylomeDB" id="Q7NJA4"/>
<dbReference type="Proteomes" id="UP000000557">
    <property type="component" value="Chromosome"/>
</dbReference>
<dbReference type="GO" id="GO:0005737">
    <property type="term" value="C:cytoplasm"/>
    <property type="evidence" value="ECO:0007669"/>
    <property type="project" value="UniProtKB-SubCell"/>
</dbReference>
<dbReference type="GO" id="GO:0004815">
    <property type="term" value="F:aspartate-tRNA ligase activity"/>
    <property type="evidence" value="ECO:0000318"/>
    <property type="project" value="GO_Central"/>
</dbReference>
<dbReference type="GO" id="GO:0050560">
    <property type="term" value="F:aspartate-tRNA(Asn) ligase activity"/>
    <property type="evidence" value="ECO:0007669"/>
    <property type="project" value="UniProtKB-EC"/>
</dbReference>
<dbReference type="GO" id="GO:0005524">
    <property type="term" value="F:ATP binding"/>
    <property type="evidence" value="ECO:0007669"/>
    <property type="project" value="UniProtKB-UniRule"/>
</dbReference>
<dbReference type="GO" id="GO:0003676">
    <property type="term" value="F:nucleic acid binding"/>
    <property type="evidence" value="ECO:0007669"/>
    <property type="project" value="InterPro"/>
</dbReference>
<dbReference type="GO" id="GO:0006422">
    <property type="term" value="P:aspartyl-tRNA aminoacylation"/>
    <property type="evidence" value="ECO:0000318"/>
    <property type="project" value="GO_Central"/>
</dbReference>
<dbReference type="CDD" id="cd00777">
    <property type="entry name" value="AspRS_core"/>
    <property type="match status" value="1"/>
</dbReference>
<dbReference type="CDD" id="cd04317">
    <property type="entry name" value="EcAspRS_like_N"/>
    <property type="match status" value="1"/>
</dbReference>
<dbReference type="Gene3D" id="3.30.930.10">
    <property type="entry name" value="Bira Bifunctional Protein, Domain 2"/>
    <property type="match status" value="1"/>
</dbReference>
<dbReference type="Gene3D" id="3.30.1360.30">
    <property type="entry name" value="GAD-like domain"/>
    <property type="match status" value="1"/>
</dbReference>
<dbReference type="Gene3D" id="2.40.50.140">
    <property type="entry name" value="Nucleic acid-binding proteins"/>
    <property type="match status" value="1"/>
</dbReference>
<dbReference type="HAMAP" id="MF_00044">
    <property type="entry name" value="Asp_tRNA_synth_type1"/>
    <property type="match status" value="1"/>
</dbReference>
<dbReference type="InterPro" id="IPR004364">
    <property type="entry name" value="Aa-tRNA-synt_II"/>
</dbReference>
<dbReference type="InterPro" id="IPR006195">
    <property type="entry name" value="aa-tRNA-synth_II"/>
</dbReference>
<dbReference type="InterPro" id="IPR045864">
    <property type="entry name" value="aa-tRNA-synth_II/BPL/LPL"/>
</dbReference>
<dbReference type="InterPro" id="IPR004524">
    <property type="entry name" value="Asp-tRNA-ligase_1"/>
</dbReference>
<dbReference type="InterPro" id="IPR047089">
    <property type="entry name" value="Asp-tRNA-ligase_1_N"/>
</dbReference>
<dbReference type="InterPro" id="IPR002312">
    <property type="entry name" value="Asp/Asn-tRNA-synth_IIb"/>
</dbReference>
<dbReference type="InterPro" id="IPR047090">
    <property type="entry name" value="AspRS_core"/>
</dbReference>
<dbReference type="InterPro" id="IPR004115">
    <property type="entry name" value="GAD-like_sf"/>
</dbReference>
<dbReference type="InterPro" id="IPR029351">
    <property type="entry name" value="GAD_dom"/>
</dbReference>
<dbReference type="InterPro" id="IPR012340">
    <property type="entry name" value="NA-bd_OB-fold"/>
</dbReference>
<dbReference type="InterPro" id="IPR004365">
    <property type="entry name" value="NA-bd_OB_tRNA"/>
</dbReference>
<dbReference type="NCBIfam" id="TIGR00459">
    <property type="entry name" value="aspS_bact"/>
    <property type="match status" value="1"/>
</dbReference>
<dbReference type="NCBIfam" id="NF001750">
    <property type="entry name" value="PRK00476.1"/>
    <property type="match status" value="1"/>
</dbReference>
<dbReference type="PANTHER" id="PTHR22594:SF5">
    <property type="entry name" value="ASPARTATE--TRNA LIGASE, MITOCHONDRIAL"/>
    <property type="match status" value="1"/>
</dbReference>
<dbReference type="PANTHER" id="PTHR22594">
    <property type="entry name" value="ASPARTYL/LYSYL-TRNA SYNTHETASE"/>
    <property type="match status" value="1"/>
</dbReference>
<dbReference type="Pfam" id="PF02938">
    <property type="entry name" value="GAD"/>
    <property type="match status" value="1"/>
</dbReference>
<dbReference type="Pfam" id="PF00152">
    <property type="entry name" value="tRNA-synt_2"/>
    <property type="match status" value="1"/>
</dbReference>
<dbReference type="Pfam" id="PF01336">
    <property type="entry name" value="tRNA_anti-codon"/>
    <property type="match status" value="1"/>
</dbReference>
<dbReference type="PRINTS" id="PR01042">
    <property type="entry name" value="TRNASYNTHASP"/>
</dbReference>
<dbReference type="SUPFAM" id="SSF55681">
    <property type="entry name" value="Class II aaRS and biotin synthetases"/>
    <property type="match status" value="1"/>
</dbReference>
<dbReference type="SUPFAM" id="SSF55261">
    <property type="entry name" value="GAD domain-like"/>
    <property type="match status" value="1"/>
</dbReference>
<dbReference type="SUPFAM" id="SSF50249">
    <property type="entry name" value="Nucleic acid-binding proteins"/>
    <property type="match status" value="1"/>
</dbReference>
<dbReference type="PROSITE" id="PS50862">
    <property type="entry name" value="AA_TRNA_LIGASE_II"/>
    <property type="match status" value="1"/>
</dbReference>
<comment type="function">
    <text evidence="1">Aspartyl-tRNA synthetase with relaxed tRNA specificity since it is able to aspartylate not only its cognate tRNA(Asp) but also tRNA(Asn). Reaction proceeds in two steps: L-aspartate is first activated by ATP to form Asp-AMP and then transferred to the acceptor end of tRNA(Asp/Asn).</text>
</comment>
<comment type="catalytic activity">
    <reaction evidence="1">
        <text>tRNA(Asx) + L-aspartate + ATP = L-aspartyl-tRNA(Asx) + AMP + diphosphate</text>
        <dbReference type="Rhea" id="RHEA:18349"/>
        <dbReference type="Rhea" id="RHEA-COMP:9710"/>
        <dbReference type="Rhea" id="RHEA-COMP:9711"/>
        <dbReference type="ChEBI" id="CHEBI:29991"/>
        <dbReference type="ChEBI" id="CHEBI:30616"/>
        <dbReference type="ChEBI" id="CHEBI:33019"/>
        <dbReference type="ChEBI" id="CHEBI:78442"/>
        <dbReference type="ChEBI" id="CHEBI:78516"/>
        <dbReference type="ChEBI" id="CHEBI:456215"/>
        <dbReference type="EC" id="6.1.1.23"/>
    </reaction>
</comment>
<comment type="subunit">
    <text evidence="1">Homodimer.</text>
</comment>
<comment type="subcellular location">
    <subcellularLocation>
        <location evidence="1">Cytoplasm</location>
    </subcellularLocation>
</comment>
<comment type="similarity">
    <text evidence="1">Belongs to the class-II aminoacyl-tRNA synthetase family. Type 1 subfamily.</text>
</comment>
<protein>
    <recommendedName>
        <fullName evidence="1">Aspartate--tRNA(Asp/Asn) ligase</fullName>
        <ecNumber evidence="1">6.1.1.23</ecNumber>
    </recommendedName>
    <alternativeName>
        <fullName evidence="1">Aspartyl-tRNA synthetase</fullName>
        <shortName evidence="1">AspRS</shortName>
    </alternativeName>
    <alternativeName>
        <fullName evidence="1">Non-discriminating aspartyl-tRNA synthetase</fullName>
        <shortName evidence="1">ND-AspRS</shortName>
    </alternativeName>
</protein>
<gene>
    <name evidence="1" type="primary">aspS</name>
    <name type="ordered locus">gll1928</name>
</gene>
<evidence type="ECO:0000255" key="1">
    <source>
        <dbReference type="HAMAP-Rule" id="MF_00044"/>
    </source>
</evidence>